<organism>
    <name type="scientific">Pongo abelii</name>
    <name type="common">Sumatran orangutan</name>
    <name type="synonym">Pongo pygmaeus abelii</name>
    <dbReference type="NCBI Taxonomy" id="9601"/>
    <lineage>
        <taxon>Eukaryota</taxon>
        <taxon>Metazoa</taxon>
        <taxon>Chordata</taxon>
        <taxon>Craniata</taxon>
        <taxon>Vertebrata</taxon>
        <taxon>Euteleostomi</taxon>
        <taxon>Mammalia</taxon>
        <taxon>Eutheria</taxon>
        <taxon>Euarchontoglires</taxon>
        <taxon>Primates</taxon>
        <taxon>Haplorrhini</taxon>
        <taxon>Catarrhini</taxon>
        <taxon>Hominidae</taxon>
        <taxon>Pongo</taxon>
    </lineage>
</organism>
<sequence>MAENLKGCSVCCKSSWNQLQDLCRLAKLSCPALGISKRNLYDFEVEYLCDYKKIREQEYYLVKWRGYPDSESTWEPRQNLKCVRILKQFHKDLERELLRRHHRSKTPRHLDPSLANYLVQKAKQRRALRRWEQELNAKRSHLGRITVENEVDLDGPPRAFVYINEYRVGEGITLNQVAVGCECQDCLWAPTGGCCPGASLHKFAYNDQGQVRLRAGLPIYECNSRCRCGYDCPNRVVQKGIRYDLCIFRTDDGRGWGVRTLEKIRKNSFVMEYVGEIITSEEAERRGQIYDRQGATYLFDLDYVEDVYTVDAAYYGNISHFVNHSCDPNLQVYNVFIDNLDERLPRIAFFATRTIRAGEELTFDYNMQVDPVDMESTRMDSNFGLAGLPGSPKKRVRIECKCGTESCRKYLF</sequence>
<keyword id="KW-0007">Acetylation</keyword>
<keyword id="KW-0025">Alternative splicing</keyword>
<keyword id="KW-0090">Biological rhythms</keyword>
<keyword id="KW-0131">Cell cycle</keyword>
<keyword id="KW-0137">Centromere</keyword>
<keyword id="KW-0156">Chromatin regulator</keyword>
<keyword id="KW-0158">Chromosome</keyword>
<keyword id="KW-0221">Differentiation</keyword>
<keyword id="KW-0479">Metal-binding</keyword>
<keyword id="KW-0489">Methyltransferase</keyword>
<keyword id="KW-0539">Nucleus</keyword>
<keyword id="KW-0597">Phosphoprotein</keyword>
<keyword id="KW-1185">Reference proteome</keyword>
<keyword id="KW-0678">Repressor</keyword>
<keyword id="KW-0698">rRNA processing</keyword>
<keyword id="KW-0949">S-adenosyl-L-methionine</keyword>
<keyword id="KW-0804">Transcription</keyword>
<keyword id="KW-0805">Transcription regulation</keyword>
<keyword id="KW-0808">Transferase</keyword>
<keyword id="KW-0832">Ubl conjugation</keyword>
<keyword id="KW-0862">Zinc</keyword>
<dbReference type="EC" id="2.1.1.355" evidence="2"/>
<dbReference type="EMBL" id="CR858772">
    <property type="protein sequence ID" value="CAH90979.1"/>
    <property type="molecule type" value="mRNA"/>
</dbReference>
<dbReference type="EMBL" id="CR858995">
    <property type="protein sequence ID" value="CAH91190.1"/>
    <property type="molecule type" value="mRNA"/>
</dbReference>
<dbReference type="RefSeq" id="NP_001125697.1">
    <molecule id="Q5RB81-2"/>
    <property type="nucleotide sequence ID" value="NM_001132225.1"/>
</dbReference>
<dbReference type="RefSeq" id="XP_024096069.1">
    <molecule id="Q5RB81-1"/>
    <property type="nucleotide sequence ID" value="XM_024240301.3"/>
</dbReference>
<dbReference type="SMR" id="Q5RB81"/>
<dbReference type="FunCoup" id="Q5RB81">
    <property type="interactions" value="1635"/>
</dbReference>
<dbReference type="STRING" id="9601.ENSPPYP00000022743"/>
<dbReference type="Ensembl" id="ENSPPYT00000023705.3">
    <molecule id="Q5RB81-1"/>
    <property type="protein sequence ID" value="ENSPPYP00000022743.3"/>
    <property type="gene ID" value="ENSPPYG00000020317.3"/>
</dbReference>
<dbReference type="Ensembl" id="ENSPPYT00000045343.1">
    <molecule id="Q5RB81-2"/>
    <property type="protein sequence ID" value="ENSPPYP00000040490.1"/>
    <property type="gene ID" value="ENSPPYG00000020317.3"/>
</dbReference>
<dbReference type="GeneID" id="100172621"/>
<dbReference type="KEGG" id="pon:100172621"/>
<dbReference type="CTD" id="6839"/>
<dbReference type="eggNOG" id="KOG1082">
    <property type="taxonomic scope" value="Eukaryota"/>
</dbReference>
<dbReference type="GeneTree" id="ENSGT00940000160063"/>
<dbReference type="InParanoid" id="Q5RB81"/>
<dbReference type="OMA" id="HHGNISH"/>
<dbReference type="OrthoDB" id="308383at2759"/>
<dbReference type="Proteomes" id="UP000001595">
    <property type="component" value="Chromosome X"/>
</dbReference>
<dbReference type="GO" id="GO:0000775">
    <property type="term" value="C:chromosome, centromeric region"/>
    <property type="evidence" value="ECO:0007669"/>
    <property type="project" value="UniProtKB-SubCell"/>
</dbReference>
<dbReference type="GO" id="GO:0061773">
    <property type="term" value="C:eNoSc complex"/>
    <property type="evidence" value="ECO:0007669"/>
    <property type="project" value="Ensembl"/>
</dbReference>
<dbReference type="GO" id="GO:0000792">
    <property type="term" value="C:heterochromatin"/>
    <property type="evidence" value="ECO:0000250"/>
    <property type="project" value="UniProtKB"/>
</dbReference>
<dbReference type="GO" id="GO:0005652">
    <property type="term" value="C:nuclear lamina"/>
    <property type="evidence" value="ECO:0007669"/>
    <property type="project" value="UniProtKB-SubCell"/>
</dbReference>
<dbReference type="GO" id="GO:0005654">
    <property type="term" value="C:nucleoplasm"/>
    <property type="evidence" value="ECO:0007669"/>
    <property type="project" value="UniProtKB-SubCell"/>
</dbReference>
<dbReference type="GO" id="GO:0005634">
    <property type="term" value="C:nucleus"/>
    <property type="evidence" value="ECO:0000250"/>
    <property type="project" value="UniProtKB"/>
</dbReference>
<dbReference type="GO" id="GO:0033553">
    <property type="term" value="C:rDNA heterochromatin"/>
    <property type="evidence" value="ECO:0007669"/>
    <property type="project" value="Ensembl"/>
</dbReference>
<dbReference type="GO" id="GO:0046974">
    <property type="term" value="F:histone H3K9 methyltransferase activity"/>
    <property type="evidence" value="ECO:0000250"/>
    <property type="project" value="UniProtKB"/>
</dbReference>
<dbReference type="GO" id="GO:0140949">
    <property type="term" value="F:histone H3K9 trimethyltransferase activity"/>
    <property type="evidence" value="ECO:0007669"/>
    <property type="project" value="UniProtKB-EC"/>
</dbReference>
<dbReference type="GO" id="GO:0140947">
    <property type="term" value="F:histone H3K9me2 methyltransferase activity"/>
    <property type="evidence" value="ECO:0007669"/>
    <property type="project" value="Ensembl"/>
</dbReference>
<dbReference type="GO" id="GO:0000977">
    <property type="term" value="F:RNA polymerase II transcription regulatory region sequence-specific DNA binding"/>
    <property type="evidence" value="ECO:0007669"/>
    <property type="project" value="Ensembl"/>
</dbReference>
<dbReference type="GO" id="GO:0000976">
    <property type="term" value="F:transcription cis-regulatory region binding"/>
    <property type="evidence" value="ECO:0000250"/>
    <property type="project" value="UniProtKB"/>
</dbReference>
<dbReference type="GO" id="GO:0008270">
    <property type="term" value="F:zinc ion binding"/>
    <property type="evidence" value="ECO:0007669"/>
    <property type="project" value="InterPro"/>
</dbReference>
<dbReference type="GO" id="GO:0001835">
    <property type="term" value="P:blastocyst hatching"/>
    <property type="evidence" value="ECO:0007669"/>
    <property type="project" value="Ensembl"/>
</dbReference>
<dbReference type="GO" id="GO:0030154">
    <property type="term" value="P:cell differentiation"/>
    <property type="evidence" value="ECO:0007669"/>
    <property type="project" value="UniProtKB-KW"/>
</dbReference>
<dbReference type="GO" id="GO:0042149">
    <property type="term" value="P:cellular response to glucose starvation"/>
    <property type="evidence" value="ECO:0007669"/>
    <property type="project" value="Ensembl"/>
</dbReference>
<dbReference type="GO" id="GO:0071456">
    <property type="term" value="P:cellular response to hypoxia"/>
    <property type="evidence" value="ECO:0007669"/>
    <property type="project" value="Ensembl"/>
</dbReference>
<dbReference type="GO" id="GO:0007623">
    <property type="term" value="P:circadian rhythm"/>
    <property type="evidence" value="ECO:0000250"/>
    <property type="project" value="UniProtKB"/>
</dbReference>
<dbReference type="GO" id="GO:0008340">
    <property type="term" value="P:determination of adult lifespan"/>
    <property type="evidence" value="ECO:0007669"/>
    <property type="project" value="Ensembl"/>
</dbReference>
<dbReference type="GO" id="GO:0006974">
    <property type="term" value="P:DNA damage response"/>
    <property type="evidence" value="ECO:0007669"/>
    <property type="project" value="Ensembl"/>
</dbReference>
<dbReference type="GO" id="GO:0097009">
    <property type="term" value="P:energy homeostasis"/>
    <property type="evidence" value="ECO:0007669"/>
    <property type="project" value="Ensembl"/>
</dbReference>
<dbReference type="GO" id="GO:0044725">
    <property type="term" value="P:epigenetic programming in the zygotic pronuclei"/>
    <property type="evidence" value="ECO:0007669"/>
    <property type="project" value="Ensembl"/>
</dbReference>
<dbReference type="GO" id="GO:0032259">
    <property type="term" value="P:methylation"/>
    <property type="evidence" value="ECO:0007669"/>
    <property type="project" value="UniProtKB-KW"/>
</dbReference>
<dbReference type="GO" id="GO:0045786">
    <property type="term" value="P:negative regulation of cell cycle"/>
    <property type="evidence" value="ECO:0007669"/>
    <property type="project" value="Ensembl"/>
</dbReference>
<dbReference type="GO" id="GO:0045892">
    <property type="term" value="P:negative regulation of DNA-templated transcription"/>
    <property type="evidence" value="ECO:0000250"/>
    <property type="project" value="UniProtKB"/>
</dbReference>
<dbReference type="GO" id="GO:0000122">
    <property type="term" value="P:negative regulation of transcription by RNA polymerase II"/>
    <property type="evidence" value="ECO:0007669"/>
    <property type="project" value="Ensembl"/>
</dbReference>
<dbReference type="GO" id="GO:0000183">
    <property type="term" value="P:rDNA heterochromatin formation"/>
    <property type="evidence" value="ECO:0007669"/>
    <property type="project" value="Ensembl"/>
</dbReference>
<dbReference type="GO" id="GO:0030500">
    <property type="term" value="P:regulation of bone mineralization"/>
    <property type="evidence" value="ECO:0007669"/>
    <property type="project" value="Ensembl"/>
</dbReference>
<dbReference type="GO" id="GO:2000772">
    <property type="term" value="P:regulation of cellular senescence"/>
    <property type="evidence" value="ECO:0007669"/>
    <property type="project" value="Ensembl"/>
</dbReference>
<dbReference type="GO" id="GO:0006282">
    <property type="term" value="P:regulation of DNA repair"/>
    <property type="evidence" value="ECO:0007669"/>
    <property type="project" value="Ensembl"/>
</dbReference>
<dbReference type="GO" id="GO:0040014">
    <property type="term" value="P:regulation of multicellular organism growth"/>
    <property type="evidence" value="ECO:0007669"/>
    <property type="project" value="Ensembl"/>
</dbReference>
<dbReference type="GO" id="GO:0046015">
    <property type="term" value="P:regulation of transcription by glucose"/>
    <property type="evidence" value="ECO:0007669"/>
    <property type="project" value="Ensembl"/>
</dbReference>
<dbReference type="GO" id="GO:0006364">
    <property type="term" value="P:rRNA processing"/>
    <property type="evidence" value="ECO:0007669"/>
    <property type="project" value="UniProtKB-KW"/>
</dbReference>
<dbReference type="CDD" id="cd18639">
    <property type="entry name" value="CD_SUV39H1_like"/>
    <property type="match status" value="1"/>
</dbReference>
<dbReference type="CDD" id="cd10525">
    <property type="entry name" value="SET_SUV39H1"/>
    <property type="match status" value="1"/>
</dbReference>
<dbReference type="FunFam" id="2.170.270.10:FF:000008">
    <property type="entry name" value="Histone-lysine N-methyltransferase"/>
    <property type="match status" value="1"/>
</dbReference>
<dbReference type="FunFam" id="2.40.50.40:FF:000015">
    <property type="entry name" value="Histone-lysine N-methyltransferase"/>
    <property type="match status" value="1"/>
</dbReference>
<dbReference type="Gene3D" id="2.40.50.40">
    <property type="match status" value="1"/>
</dbReference>
<dbReference type="Gene3D" id="2.170.270.10">
    <property type="entry name" value="SET domain"/>
    <property type="match status" value="1"/>
</dbReference>
<dbReference type="InterPro" id="IPR016197">
    <property type="entry name" value="Chromo-like_dom_sf"/>
</dbReference>
<dbReference type="InterPro" id="IPR000953">
    <property type="entry name" value="Chromo/chromo_shadow_dom"/>
</dbReference>
<dbReference type="InterPro" id="IPR023780">
    <property type="entry name" value="Chromo_domain"/>
</dbReference>
<dbReference type="InterPro" id="IPR023779">
    <property type="entry name" value="Chromodomain_CS"/>
</dbReference>
<dbReference type="InterPro" id="IPR011381">
    <property type="entry name" value="H3-K9_MeTrfase_SUV39H1/2-like"/>
</dbReference>
<dbReference type="InterPro" id="IPR050973">
    <property type="entry name" value="H3K9_Histone-Lys_N-MTase"/>
</dbReference>
<dbReference type="InterPro" id="IPR003616">
    <property type="entry name" value="Post-SET_dom"/>
</dbReference>
<dbReference type="InterPro" id="IPR007728">
    <property type="entry name" value="Pre-SET_dom"/>
</dbReference>
<dbReference type="InterPro" id="IPR001214">
    <property type="entry name" value="SET_dom"/>
</dbReference>
<dbReference type="InterPro" id="IPR046341">
    <property type="entry name" value="SET_dom_sf"/>
</dbReference>
<dbReference type="PANTHER" id="PTHR46223">
    <property type="entry name" value="HISTONE-LYSINE N-METHYLTRANSFERASE SUV39H"/>
    <property type="match status" value="1"/>
</dbReference>
<dbReference type="PANTHER" id="PTHR46223:SF1">
    <property type="entry name" value="HISTONE-LYSINE N-METHYLTRANSFERASE SUV39H1"/>
    <property type="match status" value="1"/>
</dbReference>
<dbReference type="Pfam" id="PF00385">
    <property type="entry name" value="Chromo"/>
    <property type="match status" value="1"/>
</dbReference>
<dbReference type="Pfam" id="PF05033">
    <property type="entry name" value="Pre-SET"/>
    <property type="match status" value="1"/>
</dbReference>
<dbReference type="Pfam" id="PF00856">
    <property type="entry name" value="SET"/>
    <property type="match status" value="1"/>
</dbReference>
<dbReference type="PIRSF" id="PIRSF009343">
    <property type="entry name" value="SUV39_SET"/>
    <property type="match status" value="1"/>
</dbReference>
<dbReference type="SMART" id="SM00298">
    <property type="entry name" value="CHROMO"/>
    <property type="match status" value="1"/>
</dbReference>
<dbReference type="SMART" id="SM00508">
    <property type="entry name" value="PostSET"/>
    <property type="match status" value="1"/>
</dbReference>
<dbReference type="SMART" id="SM00468">
    <property type="entry name" value="PreSET"/>
    <property type="match status" value="1"/>
</dbReference>
<dbReference type="SMART" id="SM00317">
    <property type="entry name" value="SET"/>
    <property type="match status" value="1"/>
</dbReference>
<dbReference type="SUPFAM" id="SSF54160">
    <property type="entry name" value="Chromo domain-like"/>
    <property type="match status" value="1"/>
</dbReference>
<dbReference type="SUPFAM" id="SSF82199">
    <property type="entry name" value="SET domain"/>
    <property type="match status" value="1"/>
</dbReference>
<dbReference type="PROSITE" id="PS00598">
    <property type="entry name" value="CHROMO_1"/>
    <property type="match status" value="1"/>
</dbReference>
<dbReference type="PROSITE" id="PS50013">
    <property type="entry name" value="CHROMO_2"/>
    <property type="match status" value="1"/>
</dbReference>
<dbReference type="PROSITE" id="PS50868">
    <property type="entry name" value="POST_SET"/>
    <property type="match status" value="1"/>
</dbReference>
<dbReference type="PROSITE" id="PS50867">
    <property type="entry name" value="PRE_SET"/>
    <property type="match status" value="1"/>
</dbReference>
<dbReference type="PROSITE" id="PS51579">
    <property type="entry name" value="SAM_MT43_SUVAR39_3"/>
    <property type="match status" value="1"/>
</dbReference>
<dbReference type="PROSITE" id="PS50280">
    <property type="entry name" value="SET"/>
    <property type="match status" value="1"/>
</dbReference>
<feature type="chain" id="PRO_0000281810" description="Histone-lysine N-methyltransferase SUV39H1">
    <location>
        <begin position="1"/>
        <end position="412"/>
    </location>
</feature>
<feature type="domain" description="Chromo" evidence="3">
    <location>
        <begin position="43"/>
        <end position="101"/>
    </location>
</feature>
<feature type="domain" description="Pre-SET" evidence="5">
    <location>
        <begin position="179"/>
        <end position="240"/>
    </location>
</feature>
<feature type="domain" description="SET" evidence="6">
    <location>
        <begin position="243"/>
        <end position="366"/>
    </location>
</feature>
<feature type="domain" description="Post-SET" evidence="4">
    <location>
        <begin position="396"/>
        <end position="412"/>
    </location>
</feature>
<feature type="region of interest" description="Interaction with SIRT1" evidence="1">
    <location>
        <begin position="1"/>
        <end position="89"/>
    </location>
</feature>
<feature type="region of interest" description="Mediates interaction with MECOM" evidence="1">
    <location>
        <begin position="255"/>
        <end position="377"/>
    </location>
</feature>
<feature type="binding site" evidence="1">
    <location>
        <position position="181"/>
    </location>
    <ligand>
        <name>Zn(2+)</name>
        <dbReference type="ChEBI" id="CHEBI:29105"/>
        <label>1</label>
    </ligand>
</feature>
<feature type="binding site" evidence="1">
    <location>
        <position position="181"/>
    </location>
    <ligand>
        <name>Zn(2+)</name>
        <dbReference type="ChEBI" id="CHEBI:29105"/>
        <label>2</label>
    </ligand>
</feature>
<feature type="binding site" evidence="1">
    <location>
        <position position="183"/>
    </location>
    <ligand>
        <name>Zn(2+)</name>
        <dbReference type="ChEBI" id="CHEBI:29105"/>
        <label>1</label>
    </ligand>
</feature>
<feature type="binding site" evidence="1">
    <location>
        <position position="186"/>
    </location>
    <ligand>
        <name>Zn(2+)</name>
        <dbReference type="ChEBI" id="CHEBI:29105"/>
        <label>1</label>
    </ligand>
</feature>
<feature type="binding site" evidence="1">
    <location>
        <position position="186"/>
    </location>
    <ligand>
        <name>Zn(2+)</name>
        <dbReference type="ChEBI" id="CHEBI:29105"/>
        <label>3</label>
    </ligand>
</feature>
<feature type="binding site" evidence="1">
    <location>
        <position position="194"/>
    </location>
    <ligand>
        <name>Zn(2+)</name>
        <dbReference type="ChEBI" id="CHEBI:29105"/>
        <label>1</label>
    </ligand>
</feature>
<feature type="binding site" evidence="1">
    <location>
        <position position="195"/>
    </location>
    <ligand>
        <name>Zn(2+)</name>
        <dbReference type="ChEBI" id="CHEBI:29105"/>
        <label>1</label>
    </ligand>
</feature>
<feature type="binding site" evidence="1">
    <location>
        <position position="195"/>
    </location>
    <ligand>
        <name>Zn(2+)</name>
        <dbReference type="ChEBI" id="CHEBI:29105"/>
        <label>2</label>
    </ligand>
</feature>
<feature type="binding site" evidence="1">
    <location>
        <position position="222"/>
    </location>
    <ligand>
        <name>Zn(2+)</name>
        <dbReference type="ChEBI" id="CHEBI:29105"/>
        <label>2</label>
    </ligand>
</feature>
<feature type="binding site" evidence="1">
    <location>
        <position position="222"/>
    </location>
    <ligand>
        <name>Zn(2+)</name>
        <dbReference type="ChEBI" id="CHEBI:29105"/>
        <label>3</label>
    </ligand>
</feature>
<feature type="binding site" evidence="1">
    <location>
        <position position="226"/>
    </location>
    <ligand>
        <name>Zn(2+)</name>
        <dbReference type="ChEBI" id="CHEBI:29105"/>
        <label>2</label>
    </ligand>
</feature>
<feature type="binding site" evidence="1">
    <location>
        <position position="228"/>
    </location>
    <ligand>
        <name>Zn(2+)</name>
        <dbReference type="ChEBI" id="CHEBI:29105"/>
        <label>3</label>
    </ligand>
</feature>
<feature type="binding site" evidence="1">
    <location>
        <position position="232"/>
    </location>
    <ligand>
        <name>Zn(2+)</name>
        <dbReference type="ChEBI" id="CHEBI:29105"/>
        <label>3</label>
    </ligand>
</feature>
<feature type="binding site" evidence="1">
    <location>
        <begin position="254"/>
        <end position="256"/>
    </location>
    <ligand>
        <name>S-adenosyl-L-methionine</name>
        <dbReference type="ChEBI" id="CHEBI:59789"/>
    </ligand>
</feature>
<feature type="binding site" evidence="6">
    <location>
        <position position="297"/>
    </location>
    <ligand>
        <name>S-adenosyl-L-methionine</name>
        <dbReference type="ChEBI" id="CHEBI:59789"/>
    </ligand>
</feature>
<feature type="binding site" evidence="1">
    <location>
        <begin position="323"/>
        <end position="324"/>
    </location>
    <ligand>
        <name>S-adenosyl-L-methionine</name>
        <dbReference type="ChEBI" id="CHEBI:59789"/>
    </ligand>
</feature>
<feature type="binding site" evidence="1">
    <location>
        <position position="326"/>
    </location>
    <ligand>
        <name>Zn(2+)</name>
        <dbReference type="ChEBI" id="CHEBI:29105"/>
        <label>4</label>
    </ligand>
</feature>
<feature type="binding site" evidence="1">
    <location>
        <position position="400"/>
    </location>
    <ligand>
        <name>Zn(2+)</name>
        <dbReference type="ChEBI" id="CHEBI:29105"/>
        <label>4</label>
    </ligand>
</feature>
<feature type="binding site" evidence="1">
    <location>
        <position position="402"/>
    </location>
    <ligand>
        <name>Zn(2+)</name>
        <dbReference type="ChEBI" id="CHEBI:29105"/>
        <label>4</label>
    </ligand>
</feature>
<feature type="binding site" evidence="1">
    <location>
        <position position="407"/>
    </location>
    <ligand>
        <name>Zn(2+)</name>
        <dbReference type="ChEBI" id="CHEBI:29105"/>
        <label>4</label>
    </ligand>
</feature>
<feature type="modified residue" description="N6-acetyllysine" evidence="2">
    <location>
        <position position="266"/>
    </location>
</feature>
<feature type="modified residue" description="Phosphoserine" evidence="2">
    <location>
        <position position="391"/>
    </location>
</feature>
<feature type="splice variant" id="VSP_024062" description="In isoform 2." evidence="8">
    <original>MAENLK</original>
    <variation>MVGMSRLRNDRLADPLT</variation>
    <location>
        <begin position="1"/>
        <end position="6"/>
    </location>
</feature>
<accession>Q5RB81</accession>
<accession>Q5RAM0</accession>
<reference key="1">
    <citation type="submission" date="2004-11" db="EMBL/GenBank/DDBJ databases">
        <authorList>
            <consortium name="The German cDNA consortium"/>
        </authorList>
    </citation>
    <scope>NUCLEOTIDE SEQUENCE [LARGE SCALE MRNA] (ISOFORMS 1 AND 2)</scope>
    <source>
        <tissue>Heart</tissue>
    </source>
</reference>
<protein>
    <recommendedName>
        <fullName>Histone-lysine N-methyltransferase SUV39H1</fullName>
        <ecNumber evidence="2">2.1.1.355</ecNumber>
    </recommendedName>
    <alternativeName>
        <fullName>Suppressor of variegation 3-9 homolog 1</fullName>
        <shortName>Su(var)3-9 homolog 1</shortName>
    </alternativeName>
</protein>
<comment type="function">
    <text evidence="1">Histone methyltransferase that specifically trimethylates 'Lys-9' of histone H3 using monomethylated H3 'Lys-9' as substrate. H3 'Lys-9' trimethylation represents a specific tag for epigenetic transcriptional repression by recruiting HP1 (CBX1, CBX3 and/or CBX5) proteins to methylated histones. Mainly functions in heterochromatin regions, thereby playing a central role in the establishment of constitutive heterochromatin at pericentric and telomere regions. H3 'Lys-9' trimethylation is also required to direct DNA methylation at pericentric repeats. SUV39H1 is targeted to histone H3 via its interaction with RB1 and is involved in many processes, such as repression of MYOD1-stimulated differentiation, regulation of the control switch for exiting the cell cycle and entering differentiation, repression by the PML-RARA fusion protein, BMP-induced repression, repression of switch recombination to IgA and regulation of telomere length. Component of the eNoSC (energy-dependent nucleolar silencing) complex, a complex that mediates silencing of rDNA in response to intracellular energy status and acts by recruiting histone-modifying enzymes. The eNoSC complex is able to sense the energy status of cell: upon glucose starvation, elevation of NAD(+)/NADP(+) ratio activates SIRT1, leading to histone H3 deacetylation followed by dimethylation of H3 at 'Lys-9' (H3K9me2) by SUV39H1 and the formation of silent chromatin in the rDNA locus. Recruited by the large PER complex to the E-box elements of the circadian target genes such as PER2 itself or PER1, contributes to the conversion of local chromatin to a heterochromatin-like repressive state through H3 'Lys-9' trimethylation (By similarity).</text>
</comment>
<comment type="catalytic activity">
    <reaction evidence="7">
        <text>L-lysyl-[histone] + S-adenosyl-L-methionine = N(6)-methyl-L-lysyl-[histone] + S-adenosyl-L-homocysteine + H(+)</text>
        <dbReference type="Rhea" id="RHEA:10024"/>
        <dbReference type="Rhea" id="RHEA-COMP:9845"/>
        <dbReference type="Rhea" id="RHEA-COMP:9846"/>
        <dbReference type="ChEBI" id="CHEBI:15378"/>
        <dbReference type="ChEBI" id="CHEBI:29969"/>
        <dbReference type="ChEBI" id="CHEBI:57856"/>
        <dbReference type="ChEBI" id="CHEBI:59789"/>
        <dbReference type="ChEBI" id="CHEBI:61929"/>
    </reaction>
</comment>
<comment type="catalytic activity">
    <reaction evidence="2 7">
        <text>L-lysyl(9)-[histone H3] + 3 S-adenosyl-L-methionine = N(6),N(6),N(6)-trimethyl-L-lysyl(9)-[histone H3] + 3 S-adenosyl-L-homocysteine + 3 H(+)</text>
        <dbReference type="Rhea" id="RHEA:60276"/>
        <dbReference type="Rhea" id="RHEA-COMP:15538"/>
        <dbReference type="Rhea" id="RHEA-COMP:15546"/>
        <dbReference type="ChEBI" id="CHEBI:15378"/>
        <dbReference type="ChEBI" id="CHEBI:29969"/>
        <dbReference type="ChEBI" id="CHEBI:57856"/>
        <dbReference type="ChEBI" id="CHEBI:59789"/>
        <dbReference type="ChEBI" id="CHEBI:61961"/>
        <dbReference type="EC" id="2.1.1.355"/>
    </reaction>
</comment>
<comment type="activity regulation">
    <text evidence="1">Negatively regulated by CCAR2.</text>
</comment>
<comment type="subunit">
    <text evidence="1">Interacts with H3 and H4 histones. Interacts with GFI1B, DNMT3B, CBX1, CBX4, CCAR2, MBD1, RUNX1, RUNX3, MYOD1, SMAD5 and RB1. Interacts with SBF1 through the SET domain. Interacts with HDAC1 and HDAC2 through the N-terminus and associates with the core histone deacetylase complex composed of HDAC1, HDAC2, RBBP4 and RBBP7. Component of the eNoSC complex, composed of SIRT1, SUV39H1 and RRP8. Interacts (via SET domain) with MECOM; enhances MECOM transcriptional repression activity. Interacts with LMNA; the interaction increases stability of SUV39H1. The large PER complex involved in the histone methylation is composed of at least PER2, CBX3, TRIM28, SUV39H1 and/or SUV39H2; CBX3 mediates the formation of the complex (By similarity).</text>
</comment>
<comment type="subcellular location">
    <subcellularLocation>
        <location evidence="1">Nucleus</location>
    </subcellularLocation>
    <subcellularLocation>
        <location evidence="1">Nucleus lamina</location>
    </subcellularLocation>
    <subcellularLocation>
        <location evidence="1">Nucleus</location>
        <location evidence="1">Nucleoplasm</location>
    </subcellularLocation>
    <subcellularLocation>
        <location evidence="1">Chromosome</location>
        <location evidence="1">Centromere</location>
    </subcellularLocation>
    <text evidence="1">Associates with centromeric constitutive heterochromatin.</text>
</comment>
<comment type="alternative products">
    <event type="alternative splicing"/>
    <isoform>
        <id>Q5RB81-1</id>
        <name>1</name>
        <sequence type="displayed"/>
    </isoform>
    <isoform>
        <id>Q5RB81-2</id>
        <name>2</name>
        <sequence type="described" ref="VSP_024062"/>
    </isoform>
</comment>
<comment type="domain">
    <text evidence="1">Although the SET domain contains the active site of enzymatic activity, both pre-SET and post-SET domains are required for methyltransferase activity. The SET domain also participates in stable binding to heterochromatin (By similarity).</text>
</comment>
<comment type="domain">
    <text evidence="1">In the pre-SET domain, Cys residues bind 3 zinc ions that are arranged in a triangular cluster; some of these Cys residues contribute to the binding of two zinc ions within the cluster.</text>
</comment>
<comment type="PTM">
    <text evidence="1">Phosphorylated on serine residues, and to a lesser degree, on threonine residues. The phosphorylated form is stabilized by SBF1 and is less active in its transcriptional repressor function (By similarity).</text>
</comment>
<comment type="PTM">
    <text evidence="1">Acetylated at Lys-266, leading to inhibition of enzyme activity. SIRT1-mediated deacetylation relieves this inhibition (By similarity).</text>
</comment>
<comment type="PTM">
    <text evidence="2">Ubiquitinated by the DCX(DCAF13) E3 ubiquitin ligase complex, leading to its degradation.</text>
</comment>
<comment type="similarity">
    <text evidence="7">Belongs to the class V-like SAM-binding methyltransferase superfamily. Histone-lysine methyltransferase family. Suvar3-9 subfamily.</text>
</comment>
<proteinExistence type="evidence at transcript level"/>
<gene>
    <name type="primary">SUV39H1</name>
</gene>
<evidence type="ECO:0000250" key="1"/>
<evidence type="ECO:0000250" key="2">
    <source>
        <dbReference type="UniProtKB" id="O43463"/>
    </source>
</evidence>
<evidence type="ECO:0000255" key="3">
    <source>
        <dbReference type="PROSITE-ProRule" id="PRU00053"/>
    </source>
</evidence>
<evidence type="ECO:0000255" key="4">
    <source>
        <dbReference type="PROSITE-ProRule" id="PRU00155"/>
    </source>
</evidence>
<evidence type="ECO:0000255" key="5">
    <source>
        <dbReference type="PROSITE-ProRule" id="PRU00157"/>
    </source>
</evidence>
<evidence type="ECO:0000255" key="6">
    <source>
        <dbReference type="PROSITE-ProRule" id="PRU00190"/>
    </source>
</evidence>
<evidence type="ECO:0000255" key="7">
    <source>
        <dbReference type="PROSITE-ProRule" id="PRU00912"/>
    </source>
</evidence>
<evidence type="ECO:0000303" key="8">
    <source ref="1"/>
</evidence>
<name>SUV91_PONAB</name>